<name>MP64_MYCBO</name>
<evidence type="ECO:0000269" key="1">
    <source>
    </source>
</evidence>
<evidence type="ECO:0000305" key="2"/>
<gene>
    <name type="primary">mpb64</name>
    <name type="ordered locus">BQ2027_MB2002C</name>
</gene>
<comment type="subcellular location">
    <subcellularLocation>
        <location>Secreted</location>
    </subcellularLocation>
</comment>
<comment type="similarity">
    <text evidence="2">Belongs to the RsiV family.</text>
</comment>
<keyword id="KW-0903">Direct protein sequencing</keyword>
<keyword id="KW-1185">Reference proteome</keyword>
<keyword id="KW-0964">Secreted</keyword>
<keyword id="KW-0732">Signal</keyword>
<dbReference type="EMBL" id="U34849">
    <property type="protein sequence ID" value="AAC44034.1"/>
    <property type="molecule type" value="Genomic_DNA"/>
</dbReference>
<dbReference type="EMBL" id="LT708304">
    <property type="protein sequence ID" value="SIU00607.1"/>
    <property type="molecule type" value="Genomic_DNA"/>
</dbReference>
<dbReference type="PIR" id="A30545">
    <property type="entry name" value="A30545"/>
</dbReference>
<dbReference type="RefSeq" id="NP_855652.1">
    <property type="nucleotide sequence ID" value="NC_002945.3"/>
</dbReference>
<dbReference type="SMR" id="P0A5Q5"/>
<dbReference type="KEGG" id="mbo:BQ2027_MB2002C"/>
<dbReference type="PATRIC" id="fig|233413.5.peg.2198"/>
<dbReference type="Proteomes" id="UP000001419">
    <property type="component" value="Chromosome"/>
</dbReference>
<dbReference type="GO" id="GO:0005576">
    <property type="term" value="C:extracellular region"/>
    <property type="evidence" value="ECO:0007669"/>
    <property type="project" value="UniProtKB-SubCell"/>
</dbReference>
<dbReference type="Gene3D" id="3.30.565.40">
    <property type="entry name" value="Fervidobacterium nodosum Rt17-B1 like"/>
    <property type="match status" value="1"/>
</dbReference>
<dbReference type="Gene3D" id="3.90.640.20">
    <property type="entry name" value="Heat-shock cognate protein, ATPase"/>
    <property type="match status" value="1"/>
</dbReference>
<dbReference type="InterPro" id="IPR021729">
    <property type="entry name" value="DUF3298"/>
</dbReference>
<dbReference type="InterPro" id="IPR053421">
    <property type="entry name" value="Esterase_Immunogenic_RsiV"/>
</dbReference>
<dbReference type="InterPro" id="IPR037126">
    <property type="entry name" value="PdaC/RsiV-like_sf"/>
</dbReference>
<dbReference type="NCBIfam" id="NF043047">
    <property type="entry name" value="EstaseRv3036c"/>
    <property type="match status" value="1"/>
</dbReference>
<dbReference type="Pfam" id="PF11738">
    <property type="entry name" value="DUF3298"/>
    <property type="match status" value="1"/>
</dbReference>
<proteinExistence type="evidence at protein level"/>
<organism>
    <name type="scientific">Mycobacterium bovis (strain ATCC BAA-935 / AF2122/97)</name>
    <dbReference type="NCBI Taxonomy" id="233413"/>
    <lineage>
        <taxon>Bacteria</taxon>
        <taxon>Bacillati</taxon>
        <taxon>Actinomycetota</taxon>
        <taxon>Actinomycetes</taxon>
        <taxon>Mycobacteriales</taxon>
        <taxon>Mycobacteriaceae</taxon>
        <taxon>Mycobacterium</taxon>
        <taxon>Mycobacterium tuberculosis complex</taxon>
    </lineage>
</organism>
<reference key="1">
    <citation type="journal article" date="1989" name="Infect. Immun.">
        <title>Cloning and characterization of the gene for immunogenic protein MPB64 of Mycobacterium bovis BCG.</title>
        <authorList>
            <person name="Yamaguchi R."/>
            <person name="Matsuo K."/>
            <person name="Yamazaki A."/>
            <person name="Abe C."/>
            <person name="Nagai S."/>
            <person name="Terasaka K."/>
            <person name="Yamada T."/>
        </authorList>
    </citation>
    <scope>NUCLEOTIDE SEQUENCE [GENOMIC DNA]</scope>
    <source>
        <strain>BCG</strain>
    </source>
</reference>
<reference key="2">
    <citation type="journal article" date="2003" name="Proc. Natl. Acad. Sci. U.S.A.">
        <title>The complete genome sequence of Mycobacterium bovis.</title>
        <authorList>
            <person name="Garnier T."/>
            <person name="Eiglmeier K."/>
            <person name="Camus J.-C."/>
            <person name="Medina N."/>
            <person name="Mansoor H."/>
            <person name="Pryor M."/>
            <person name="Duthoy S."/>
            <person name="Grondin S."/>
            <person name="Lacroix C."/>
            <person name="Monsempe C."/>
            <person name="Simon S."/>
            <person name="Harris B."/>
            <person name="Atkin R."/>
            <person name="Doggett J."/>
            <person name="Mayes R."/>
            <person name="Keating L."/>
            <person name="Wheeler P.R."/>
            <person name="Parkhill J."/>
            <person name="Barrell B.G."/>
            <person name="Cole S.T."/>
            <person name="Gordon S.V."/>
            <person name="Hewinson R.G."/>
        </authorList>
    </citation>
    <scope>NUCLEOTIDE SEQUENCE [LARGE SCALE GENOMIC DNA]</scope>
    <source>
        <strain>ATCC BAA-935 / AF2122/97</strain>
    </source>
</reference>
<reference key="3">
    <citation type="journal article" date="2017" name="Genome Announc.">
        <title>Updated reference genome sequence and annotation of Mycobacterium bovis AF2122/97.</title>
        <authorList>
            <person name="Malone K.M."/>
            <person name="Farrell D."/>
            <person name="Stuber T.P."/>
            <person name="Schubert O.T."/>
            <person name="Aebersold R."/>
            <person name="Robbe-Austerman S."/>
            <person name="Gordon S.V."/>
        </authorList>
    </citation>
    <scope>NUCLEOTIDE SEQUENCE [LARGE SCALE GENOMIC DNA]</scope>
    <scope>GENOME REANNOTATION</scope>
    <source>
        <strain>ATCC BAA-935 / AF2122/97</strain>
    </source>
</reference>
<reference key="4">
    <citation type="journal article" date="1986" name="Infect. Immun.">
        <title>Properties of proteins MPB64, MPB70, and MPB80 of Mycobacterium bovis BCG.</title>
        <authorList>
            <person name="Harboe M."/>
            <person name="Nagai S."/>
            <person name="Patarroyo M.E."/>
            <person name="Torres M."/>
            <person name="Ramirez C."/>
            <person name="Cruz N."/>
        </authorList>
    </citation>
    <scope>PROTEIN SEQUENCE OF 24-53</scope>
</reference>
<sequence>MRIKIFMLVTAVVLLCCSGVATAAPKTYCEELKGTDTGQACQIQMSDPAYNINISLPSYYPDQKSLENYIAQTRDKFLSAATSSTPREAPYELNITSATYQSAIPPRGTQAVVLKVYQNAGGTHPTTTYKAFDWDQAYRKPITYDTLWQADTDPLPVVFPIVQGELSKQTGQQVSIAPNAGLDPVNYQNFAVTNDGVIFFFNPGELLPEAAGPTQVLVPRSAIDSMLA</sequence>
<protein>
    <recommendedName>
        <fullName>Immunogenic protein MPB64</fullName>
    </recommendedName>
    <alternativeName>
        <fullName>Antigen MPB64</fullName>
    </alternativeName>
</protein>
<accession>P0A5Q5</accession>
<accession>A0A1R3Y097</accession>
<accession>P19996</accession>
<accession>X2BJ68</accession>
<feature type="signal peptide" evidence="1">
    <location>
        <begin position="1"/>
        <end position="23"/>
    </location>
</feature>
<feature type="chain" id="PRO_0000021737" description="Immunogenic protein MPB64">
    <location>
        <begin position="24"/>
        <end position="228"/>
    </location>
</feature>
<feature type="sequence conflict" description="In Ref. 4; AA sequence." evidence="2" ref="4">
    <original>C</original>
    <variation>H</variation>
    <location>
        <position position="29"/>
    </location>
</feature>
<feature type="sequence conflict" description="In Ref. 4; AA sequence." evidence="2" ref="4">
    <original>C</original>
    <variation>R</variation>
    <location>
        <position position="29"/>
    </location>
</feature>
<feature type="sequence conflict" description="In Ref. 4; AA sequence." evidence="2" ref="4">
    <original>C</original>
    <variation>Y</variation>
    <location>
        <position position="41"/>
    </location>
</feature>